<name>SMCO2_MACFA</name>
<evidence type="ECO:0000255" key="1"/>
<evidence type="ECO:0000305" key="2"/>
<dbReference type="EMBL" id="AB070115">
    <property type="protein sequence ID" value="BAB63060.1"/>
    <property type="molecule type" value="mRNA"/>
</dbReference>
<dbReference type="RefSeq" id="NP_001270006.1">
    <property type="nucleotide sequence ID" value="NM_001283077.1"/>
</dbReference>
<dbReference type="STRING" id="9541.ENSMFAP00000034164"/>
<dbReference type="Proteomes" id="UP000233100">
    <property type="component" value="Unplaced"/>
</dbReference>
<dbReference type="GO" id="GO:0016020">
    <property type="term" value="C:membrane"/>
    <property type="evidence" value="ECO:0007669"/>
    <property type="project" value="UniProtKB-SubCell"/>
</dbReference>
<dbReference type="InterPro" id="IPR026617">
    <property type="entry name" value="SMCO2/5"/>
</dbReference>
<dbReference type="PANTHER" id="PTHR22422:SF5">
    <property type="entry name" value="SINGLE-PASS MEMBRANE AND COILED-COIL DOMAIN-CONTAINING PROTEIN 2"/>
    <property type="match status" value="1"/>
</dbReference>
<dbReference type="PANTHER" id="PTHR22422">
    <property type="entry name" value="TRANSMEMBRANE AND COILED-COIL DOMAIN-CONTAINING PROTEIN 5B-RELATED"/>
    <property type="match status" value="1"/>
</dbReference>
<reference key="1">
    <citation type="journal article" date="2002" name="BMC Genomics">
        <title>Cynomolgus monkey testicular cDNAs for discovery of novel human genes in the human genome sequence.</title>
        <authorList>
            <person name="Osada N."/>
            <person name="Hida M."/>
            <person name="Kusuda J."/>
            <person name="Tanuma R."/>
            <person name="Hirata M."/>
            <person name="Suto Y."/>
            <person name="Hirai M."/>
            <person name="Terao K."/>
            <person name="Sugano S."/>
            <person name="Hashimoto K."/>
        </authorList>
    </citation>
    <scope>NUCLEOTIDE SEQUENCE [LARGE SCALE MRNA]</scope>
    <source>
        <tissue>Testis</tissue>
    </source>
</reference>
<accession>Q95JR4</accession>
<sequence length="293" mass="33840">MALTPTNLNNEMSLPMKMDCQEQELTEKNNSFFQKLNVTKSVMQDLLKEIIKVDYILDRSDDEDDISSENPQTDFLHKGMLELEAKHDQDLGKQDEQETDVDEYPQASTSLQFSKKNLLEFLLKDMLTLKGQIDKLEDRGLDLDQGTNTEVNARNEVYELKKKVMESLEDLCKNVELLSAKLRMYQMEGENTDSHSSEETDMEEMETLLPQAPASFLVQNSPPPNTVWKCALRIFIMFYVLTVTGLLCYILFFGATFLFERVLLRMLGCRTTWDLREMIEPFLNSEVEALLPS</sequence>
<protein>
    <recommendedName>
        <fullName>Single-pass membrane and coiled-coil domain-containing protein 2</fullName>
    </recommendedName>
</protein>
<organism>
    <name type="scientific">Macaca fascicularis</name>
    <name type="common">Crab-eating macaque</name>
    <name type="synonym">Cynomolgus monkey</name>
    <dbReference type="NCBI Taxonomy" id="9541"/>
    <lineage>
        <taxon>Eukaryota</taxon>
        <taxon>Metazoa</taxon>
        <taxon>Chordata</taxon>
        <taxon>Craniata</taxon>
        <taxon>Vertebrata</taxon>
        <taxon>Euteleostomi</taxon>
        <taxon>Mammalia</taxon>
        <taxon>Eutheria</taxon>
        <taxon>Euarchontoglires</taxon>
        <taxon>Primates</taxon>
        <taxon>Haplorrhini</taxon>
        <taxon>Catarrhini</taxon>
        <taxon>Cercopithecidae</taxon>
        <taxon>Cercopithecinae</taxon>
        <taxon>Macaca</taxon>
    </lineage>
</organism>
<gene>
    <name type="primary">SMCO2</name>
    <name type="ORF">QtsA-14166</name>
</gene>
<comment type="subcellular location">
    <subcellularLocation>
        <location evidence="2">Membrane</location>
        <topology evidence="2">Single-pass membrane protein</topology>
    </subcellularLocation>
</comment>
<keyword id="KW-0175">Coiled coil</keyword>
<keyword id="KW-0472">Membrane</keyword>
<keyword id="KW-1185">Reference proteome</keyword>
<keyword id="KW-0812">Transmembrane</keyword>
<keyword id="KW-1133">Transmembrane helix</keyword>
<proteinExistence type="evidence at transcript level"/>
<feature type="chain" id="PRO_0000340700" description="Single-pass membrane and coiled-coil domain-containing protein 2">
    <location>
        <begin position="1"/>
        <end position="293"/>
    </location>
</feature>
<feature type="transmembrane region" description="Helical" evidence="1">
    <location>
        <begin position="234"/>
        <end position="254"/>
    </location>
</feature>
<feature type="coiled-coil region" evidence="1">
    <location>
        <begin position="116"/>
        <end position="188"/>
    </location>
</feature>